<dbReference type="EC" id="2.5.1.78" evidence="1"/>
<dbReference type="EMBL" id="CP000020">
    <property type="protein sequence ID" value="AAW85198.1"/>
    <property type="molecule type" value="Genomic_DNA"/>
</dbReference>
<dbReference type="RefSeq" id="YP_204086.1">
    <property type="nucleotide sequence ID" value="NC_006840.2"/>
</dbReference>
<dbReference type="SMR" id="Q5E6Z8"/>
<dbReference type="STRING" id="312309.VF_0703"/>
<dbReference type="EnsemblBacteria" id="AAW85198">
    <property type="protein sequence ID" value="AAW85198"/>
    <property type="gene ID" value="VF_0703"/>
</dbReference>
<dbReference type="GeneID" id="54163358"/>
<dbReference type="KEGG" id="vfi:VF_0703"/>
<dbReference type="PATRIC" id="fig|312309.11.peg.697"/>
<dbReference type="eggNOG" id="COG0054">
    <property type="taxonomic scope" value="Bacteria"/>
</dbReference>
<dbReference type="HOGENOM" id="CLU_089358_1_1_6"/>
<dbReference type="OrthoDB" id="9809709at2"/>
<dbReference type="UniPathway" id="UPA00275">
    <property type="reaction ID" value="UER00404"/>
</dbReference>
<dbReference type="Proteomes" id="UP000000537">
    <property type="component" value="Chromosome I"/>
</dbReference>
<dbReference type="GO" id="GO:0005829">
    <property type="term" value="C:cytosol"/>
    <property type="evidence" value="ECO:0007669"/>
    <property type="project" value="TreeGrafter"/>
</dbReference>
<dbReference type="GO" id="GO:0009349">
    <property type="term" value="C:riboflavin synthase complex"/>
    <property type="evidence" value="ECO:0007669"/>
    <property type="project" value="InterPro"/>
</dbReference>
<dbReference type="GO" id="GO:0000906">
    <property type="term" value="F:6,7-dimethyl-8-ribityllumazine synthase activity"/>
    <property type="evidence" value="ECO:0007669"/>
    <property type="project" value="UniProtKB-UniRule"/>
</dbReference>
<dbReference type="GO" id="GO:0009231">
    <property type="term" value="P:riboflavin biosynthetic process"/>
    <property type="evidence" value="ECO:0007669"/>
    <property type="project" value="UniProtKB-UniRule"/>
</dbReference>
<dbReference type="CDD" id="cd09209">
    <property type="entry name" value="Lumazine_synthase-I"/>
    <property type="match status" value="1"/>
</dbReference>
<dbReference type="FunFam" id="3.40.50.960:FF:000001">
    <property type="entry name" value="6,7-dimethyl-8-ribityllumazine synthase"/>
    <property type="match status" value="1"/>
</dbReference>
<dbReference type="Gene3D" id="3.40.50.960">
    <property type="entry name" value="Lumazine/riboflavin synthase"/>
    <property type="match status" value="1"/>
</dbReference>
<dbReference type="HAMAP" id="MF_00178">
    <property type="entry name" value="Lumazine_synth"/>
    <property type="match status" value="1"/>
</dbReference>
<dbReference type="InterPro" id="IPR034964">
    <property type="entry name" value="LS"/>
</dbReference>
<dbReference type="InterPro" id="IPR002180">
    <property type="entry name" value="LS/RS"/>
</dbReference>
<dbReference type="InterPro" id="IPR036467">
    <property type="entry name" value="LS/RS_sf"/>
</dbReference>
<dbReference type="NCBIfam" id="TIGR00114">
    <property type="entry name" value="lumazine-synth"/>
    <property type="match status" value="1"/>
</dbReference>
<dbReference type="NCBIfam" id="NF000812">
    <property type="entry name" value="PRK00061.1-4"/>
    <property type="match status" value="1"/>
</dbReference>
<dbReference type="PANTHER" id="PTHR21058:SF0">
    <property type="entry name" value="6,7-DIMETHYL-8-RIBITYLLUMAZINE SYNTHASE"/>
    <property type="match status" value="1"/>
</dbReference>
<dbReference type="PANTHER" id="PTHR21058">
    <property type="entry name" value="6,7-DIMETHYL-8-RIBITYLLUMAZINE SYNTHASE DMRL SYNTHASE LUMAZINE SYNTHASE"/>
    <property type="match status" value="1"/>
</dbReference>
<dbReference type="Pfam" id="PF00885">
    <property type="entry name" value="DMRL_synthase"/>
    <property type="match status" value="1"/>
</dbReference>
<dbReference type="SUPFAM" id="SSF52121">
    <property type="entry name" value="Lumazine synthase"/>
    <property type="match status" value="1"/>
</dbReference>
<reference key="1">
    <citation type="journal article" date="2005" name="Proc. Natl. Acad. Sci. U.S.A.">
        <title>Complete genome sequence of Vibrio fischeri: a symbiotic bacterium with pathogenic congeners.</title>
        <authorList>
            <person name="Ruby E.G."/>
            <person name="Urbanowski M."/>
            <person name="Campbell J."/>
            <person name="Dunn A."/>
            <person name="Faini M."/>
            <person name="Gunsalus R."/>
            <person name="Lostroh P."/>
            <person name="Lupp C."/>
            <person name="McCann J."/>
            <person name="Millikan D."/>
            <person name="Schaefer A."/>
            <person name="Stabb E."/>
            <person name="Stevens A."/>
            <person name="Visick K."/>
            <person name="Whistler C."/>
            <person name="Greenberg E.P."/>
        </authorList>
    </citation>
    <scope>NUCLEOTIDE SEQUENCE [LARGE SCALE GENOMIC DNA]</scope>
    <source>
        <strain>ATCC 700601 / ES114</strain>
    </source>
</reference>
<name>RISB_ALIF1</name>
<accession>Q5E6Z8</accession>
<feature type="chain" id="PRO_1000040545" description="6,7-dimethyl-8-ribityllumazine synthase">
    <location>
        <begin position="1"/>
        <end position="156"/>
    </location>
</feature>
<feature type="active site" description="Proton donor" evidence="1">
    <location>
        <position position="89"/>
    </location>
</feature>
<feature type="binding site" evidence="1">
    <location>
        <position position="22"/>
    </location>
    <ligand>
        <name>5-amino-6-(D-ribitylamino)uracil</name>
        <dbReference type="ChEBI" id="CHEBI:15934"/>
    </ligand>
</feature>
<feature type="binding site" evidence="1">
    <location>
        <begin position="57"/>
        <end position="59"/>
    </location>
    <ligand>
        <name>5-amino-6-(D-ribitylamino)uracil</name>
        <dbReference type="ChEBI" id="CHEBI:15934"/>
    </ligand>
</feature>
<feature type="binding site" evidence="1">
    <location>
        <begin position="81"/>
        <end position="83"/>
    </location>
    <ligand>
        <name>5-amino-6-(D-ribitylamino)uracil</name>
        <dbReference type="ChEBI" id="CHEBI:15934"/>
    </ligand>
</feature>
<feature type="binding site" evidence="1">
    <location>
        <begin position="86"/>
        <end position="87"/>
    </location>
    <ligand>
        <name>(2S)-2-hydroxy-3-oxobutyl phosphate</name>
        <dbReference type="ChEBI" id="CHEBI:58830"/>
    </ligand>
</feature>
<feature type="binding site" evidence="1">
    <location>
        <position position="114"/>
    </location>
    <ligand>
        <name>5-amino-6-(D-ribitylamino)uracil</name>
        <dbReference type="ChEBI" id="CHEBI:15934"/>
    </ligand>
</feature>
<feature type="binding site" evidence="1">
    <location>
        <position position="128"/>
    </location>
    <ligand>
        <name>(2S)-2-hydroxy-3-oxobutyl phosphate</name>
        <dbReference type="ChEBI" id="CHEBI:58830"/>
    </ligand>
</feature>
<keyword id="KW-1185">Reference proteome</keyword>
<keyword id="KW-0686">Riboflavin biosynthesis</keyword>
<keyword id="KW-0808">Transferase</keyword>
<organism>
    <name type="scientific">Aliivibrio fischeri (strain ATCC 700601 / ES114)</name>
    <name type="common">Vibrio fischeri</name>
    <dbReference type="NCBI Taxonomy" id="312309"/>
    <lineage>
        <taxon>Bacteria</taxon>
        <taxon>Pseudomonadati</taxon>
        <taxon>Pseudomonadota</taxon>
        <taxon>Gammaproteobacteria</taxon>
        <taxon>Vibrionales</taxon>
        <taxon>Vibrionaceae</taxon>
        <taxon>Aliivibrio</taxon>
    </lineage>
</organism>
<protein>
    <recommendedName>
        <fullName evidence="1">6,7-dimethyl-8-ribityllumazine synthase</fullName>
        <shortName evidence="1">DMRL synthase</shortName>
        <shortName evidence="1">LS</shortName>
        <shortName evidence="1">Lumazine synthase</shortName>
        <ecNumber evidence="1">2.5.1.78</ecNumber>
    </recommendedName>
</protein>
<gene>
    <name evidence="1" type="primary">ribH</name>
    <name type="ordered locus">VF_0703</name>
</gene>
<evidence type="ECO:0000255" key="1">
    <source>
        <dbReference type="HAMAP-Rule" id="MF_00178"/>
    </source>
</evidence>
<sequence>MNVIEGGVAAPNAKIAIVISRFNSFINESLLSGAIDTLKRFGQVSEENITVVRCPGAVELPLVAQRVAKTAKYDAIVSLGSVIRGGTPHFDYVCSECNKGLAQVSLEYSIPVAFGVLTVDTIDQAIERAGTKAGNKGAEAALSALEMINVLSQIES</sequence>
<comment type="function">
    <text evidence="1">Catalyzes the formation of 6,7-dimethyl-8-ribityllumazine by condensation of 5-amino-6-(D-ribitylamino)uracil with 3,4-dihydroxy-2-butanone 4-phosphate. This is the penultimate step in the biosynthesis of riboflavin.</text>
</comment>
<comment type="catalytic activity">
    <reaction evidence="1">
        <text>(2S)-2-hydroxy-3-oxobutyl phosphate + 5-amino-6-(D-ribitylamino)uracil = 6,7-dimethyl-8-(1-D-ribityl)lumazine + phosphate + 2 H2O + H(+)</text>
        <dbReference type="Rhea" id="RHEA:26152"/>
        <dbReference type="ChEBI" id="CHEBI:15377"/>
        <dbReference type="ChEBI" id="CHEBI:15378"/>
        <dbReference type="ChEBI" id="CHEBI:15934"/>
        <dbReference type="ChEBI" id="CHEBI:43474"/>
        <dbReference type="ChEBI" id="CHEBI:58201"/>
        <dbReference type="ChEBI" id="CHEBI:58830"/>
        <dbReference type="EC" id="2.5.1.78"/>
    </reaction>
</comment>
<comment type="pathway">
    <text evidence="1">Cofactor biosynthesis; riboflavin biosynthesis; riboflavin from 2-hydroxy-3-oxobutyl phosphate and 5-amino-6-(D-ribitylamino)uracil: step 1/2.</text>
</comment>
<comment type="subunit">
    <text evidence="1">Forms an icosahedral capsid composed of 60 subunits, arranged as a dodecamer of pentamers.</text>
</comment>
<comment type="similarity">
    <text evidence="1">Belongs to the DMRL synthase family.</text>
</comment>
<proteinExistence type="inferred from homology"/>